<protein>
    <recommendedName>
        <fullName evidence="1">ATP-dependent Clp protease adapter protein ClpS</fullName>
    </recommendedName>
</protein>
<comment type="function">
    <text evidence="1">Involved in the modulation of the specificity of the ClpAP-mediated ATP-dependent protein degradation.</text>
</comment>
<comment type="subunit">
    <text evidence="1">Binds to the N-terminal domain of the chaperone ClpA.</text>
</comment>
<comment type="similarity">
    <text evidence="1">Belongs to the ClpS family.</text>
</comment>
<sequence length="109" mass="12322">MTERKHDDTGVEEGTGLATKTRPATKKPSLYRVLLLNDDYTPMEFVVEVLARIFRKSPEDAARIMLHVHQNGVGMCGVYTYEVAETKVAQVMDAARRAQHPLQCTMEKE</sequence>
<feature type="chain" id="PRO_0000300711" description="ATP-dependent Clp protease adapter protein ClpS">
    <location>
        <begin position="1"/>
        <end position="109"/>
    </location>
</feature>
<feature type="region of interest" description="Disordered" evidence="2">
    <location>
        <begin position="1"/>
        <end position="23"/>
    </location>
</feature>
<evidence type="ECO:0000255" key="1">
    <source>
        <dbReference type="HAMAP-Rule" id="MF_00302"/>
    </source>
</evidence>
<evidence type="ECO:0000256" key="2">
    <source>
        <dbReference type="SAM" id="MobiDB-lite"/>
    </source>
</evidence>
<organism>
    <name type="scientific">Maricaulis maris (strain MCS10)</name>
    <name type="common">Caulobacter maris</name>
    <dbReference type="NCBI Taxonomy" id="394221"/>
    <lineage>
        <taxon>Bacteria</taxon>
        <taxon>Pseudomonadati</taxon>
        <taxon>Pseudomonadota</taxon>
        <taxon>Alphaproteobacteria</taxon>
        <taxon>Maricaulales</taxon>
        <taxon>Maricaulaceae</taxon>
        <taxon>Maricaulis</taxon>
    </lineage>
</organism>
<name>CLPS_MARMM</name>
<proteinExistence type="inferred from homology"/>
<keyword id="KW-1185">Reference proteome</keyword>
<reference key="1">
    <citation type="submission" date="2006-08" db="EMBL/GenBank/DDBJ databases">
        <title>Complete sequence of Maricaulis maris MCS10.</title>
        <authorList>
            <consortium name="US DOE Joint Genome Institute"/>
            <person name="Copeland A."/>
            <person name="Lucas S."/>
            <person name="Lapidus A."/>
            <person name="Barry K."/>
            <person name="Detter J.C."/>
            <person name="Glavina del Rio T."/>
            <person name="Hammon N."/>
            <person name="Israni S."/>
            <person name="Dalin E."/>
            <person name="Tice H."/>
            <person name="Pitluck S."/>
            <person name="Saunders E."/>
            <person name="Brettin T."/>
            <person name="Bruce D."/>
            <person name="Han C."/>
            <person name="Tapia R."/>
            <person name="Gilna P."/>
            <person name="Schmutz J."/>
            <person name="Larimer F."/>
            <person name="Land M."/>
            <person name="Hauser L."/>
            <person name="Kyrpides N."/>
            <person name="Mikhailova N."/>
            <person name="Viollier P."/>
            <person name="Stephens C."/>
            <person name="Richardson P."/>
        </authorList>
    </citation>
    <scope>NUCLEOTIDE SEQUENCE [LARGE SCALE GENOMIC DNA]</scope>
    <source>
        <strain>MCS10</strain>
    </source>
</reference>
<dbReference type="EMBL" id="CP000449">
    <property type="protein sequence ID" value="ABI65577.1"/>
    <property type="molecule type" value="Genomic_DNA"/>
</dbReference>
<dbReference type="RefSeq" id="WP_011643224.1">
    <property type="nucleotide sequence ID" value="NC_008347.1"/>
</dbReference>
<dbReference type="SMR" id="Q0AQ60"/>
<dbReference type="STRING" id="394221.Mmar10_1285"/>
<dbReference type="KEGG" id="mmr:Mmar10_1285"/>
<dbReference type="eggNOG" id="COG2127">
    <property type="taxonomic scope" value="Bacteria"/>
</dbReference>
<dbReference type="HOGENOM" id="CLU_134358_0_0_5"/>
<dbReference type="OrthoDB" id="9796121at2"/>
<dbReference type="Proteomes" id="UP000001964">
    <property type="component" value="Chromosome"/>
</dbReference>
<dbReference type="GO" id="GO:0030163">
    <property type="term" value="P:protein catabolic process"/>
    <property type="evidence" value="ECO:0007669"/>
    <property type="project" value="InterPro"/>
</dbReference>
<dbReference type="GO" id="GO:0006508">
    <property type="term" value="P:proteolysis"/>
    <property type="evidence" value="ECO:0007669"/>
    <property type="project" value="UniProtKB-UniRule"/>
</dbReference>
<dbReference type="FunFam" id="3.30.1390.10:FF:000002">
    <property type="entry name" value="ATP-dependent Clp protease adapter protein ClpS"/>
    <property type="match status" value="1"/>
</dbReference>
<dbReference type="Gene3D" id="3.30.1390.10">
    <property type="match status" value="1"/>
</dbReference>
<dbReference type="HAMAP" id="MF_00302">
    <property type="entry name" value="ClpS"/>
    <property type="match status" value="1"/>
</dbReference>
<dbReference type="InterPro" id="IPR022935">
    <property type="entry name" value="ClpS"/>
</dbReference>
<dbReference type="InterPro" id="IPR003769">
    <property type="entry name" value="ClpS_core"/>
</dbReference>
<dbReference type="InterPro" id="IPR014719">
    <property type="entry name" value="Ribosomal_bL12_C/ClpS-like"/>
</dbReference>
<dbReference type="NCBIfam" id="NF000669">
    <property type="entry name" value="PRK00033.1-2"/>
    <property type="match status" value="1"/>
</dbReference>
<dbReference type="NCBIfam" id="NF000672">
    <property type="entry name" value="PRK00033.1-5"/>
    <property type="match status" value="1"/>
</dbReference>
<dbReference type="PANTHER" id="PTHR33473:SF19">
    <property type="entry name" value="ATP-DEPENDENT CLP PROTEASE ADAPTER PROTEIN CLPS"/>
    <property type="match status" value="1"/>
</dbReference>
<dbReference type="PANTHER" id="PTHR33473">
    <property type="entry name" value="ATP-DEPENDENT CLP PROTEASE ADAPTER PROTEIN CLPS1, CHLOROPLASTIC"/>
    <property type="match status" value="1"/>
</dbReference>
<dbReference type="Pfam" id="PF02617">
    <property type="entry name" value="ClpS"/>
    <property type="match status" value="1"/>
</dbReference>
<dbReference type="SUPFAM" id="SSF54736">
    <property type="entry name" value="ClpS-like"/>
    <property type="match status" value="1"/>
</dbReference>
<gene>
    <name evidence="1" type="primary">clpS</name>
    <name type="ordered locus">Mmar10_1285</name>
</gene>
<accession>Q0AQ60</accession>